<name>MUTL_BACC0</name>
<accession>B7JJ46</accession>
<protein>
    <recommendedName>
        <fullName evidence="1">DNA mismatch repair protein MutL</fullName>
    </recommendedName>
</protein>
<proteinExistence type="inferred from homology"/>
<keyword id="KW-0227">DNA damage</keyword>
<keyword id="KW-0234">DNA repair</keyword>
<reference key="1">
    <citation type="submission" date="2008-10" db="EMBL/GenBank/DDBJ databases">
        <title>Genome sequence of Bacillus cereus AH820.</title>
        <authorList>
            <person name="Dodson R.J."/>
            <person name="Durkin A.S."/>
            <person name="Rosovitz M.J."/>
            <person name="Rasko D.A."/>
            <person name="Hoffmaster A."/>
            <person name="Ravel J."/>
            <person name="Sutton G."/>
        </authorList>
    </citation>
    <scope>NUCLEOTIDE SEQUENCE [LARGE SCALE GENOMIC DNA]</scope>
    <source>
        <strain>AH820</strain>
    </source>
</reference>
<evidence type="ECO:0000255" key="1">
    <source>
        <dbReference type="HAMAP-Rule" id="MF_00149"/>
    </source>
</evidence>
<evidence type="ECO:0000256" key="2">
    <source>
        <dbReference type="SAM" id="MobiDB-lite"/>
    </source>
</evidence>
<gene>
    <name evidence="1" type="primary">mutL</name>
    <name type="ordered locus">BCAH820_3780</name>
</gene>
<organism>
    <name type="scientific">Bacillus cereus (strain AH820)</name>
    <dbReference type="NCBI Taxonomy" id="405535"/>
    <lineage>
        <taxon>Bacteria</taxon>
        <taxon>Bacillati</taxon>
        <taxon>Bacillota</taxon>
        <taxon>Bacilli</taxon>
        <taxon>Bacillales</taxon>
        <taxon>Bacillaceae</taxon>
        <taxon>Bacillus</taxon>
        <taxon>Bacillus cereus group</taxon>
    </lineage>
</organism>
<comment type="function">
    <text evidence="1">This protein is involved in the repair of mismatches in DNA. It is required for dam-dependent methyl-directed DNA mismatch repair. May act as a 'molecular matchmaker', a protein that promotes the formation of a stable complex between two or more DNA-binding proteins in an ATP-dependent manner without itself being part of a final effector complex.</text>
</comment>
<comment type="similarity">
    <text evidence="1">Belongs to the DNA mismatch repair MutL/HexB family.</text>
</comment>
<feature type="chain" id="PRO_1000192158" description="DNA mismatch repair protein MutL">
    <location>
        <begin position="1"/>
        <end position="647"/>
    </location>
</feature>
<feature type="region of interest" description="Disordered" evidence="2">
    <location>
        <begin position="375"/>
        <end position="433"/>
    </location>
</feature>
<feature type="compositionally biased region" description="Low complexity" evidence="2">
    <location>
        <begin position="387"/>
        <end position="400"/>
    </location>
</feature>
<dbReference type="EMBL" id="CP001283">
    <property type="protein sequence ID" value="ACK88836.1"/>
    <property type="molecule type" value="Genomic_DNA"/>
</dbReference>
<dbReference type="RefSeq" id="WP_000516482.1">
    <property type="nucleotide sequence ID" value="NC_011773.1"/>
</dbReference>
<dbReference type="SMR" id="B7JJ46"/>
<dbReference type="KEGG" id="bcu:BCAH820_3780"/>
<dbReference type="HOGENOM" id="CLU_004131_4_1_9"/>
<dbReference type="Proteomes" id="UP000001363">
    <property type="component" value="Chromosome"/>
</dbReference>
<dbReference type="GO" id="GO:0032300">
    <property type="term" value="C:mismatch repair complex"/>
    <property type="evidence" value="ECO:0007669"/>
    <property type="project" value="InterPro"/>
</dbReference>
<dbReference type="GO" id="GO:0005524">
    <property type="term" value="F:ATP binding"/>
    <property type="evidence" value="ECO:0007669"/>
    <property type="project" value="InterPro"/>
</dbReference>
<dbReference type="GO" id="GO:0016887">
    <property type="term" value="F:ATP hydrolysis activity"/>
    <property type="evidence" value="ECO:0007669"/>
    <property type="project" value="InterPro"/>
</dbReference>
<dbReference type="GO" id="GO:0140664">
    <property type="term" value="F:ATP-dependent DNA damage sensor activity"/>
    <property type="evidence" value="ECO:0007669"/>
    <property type="project" value="InterPro"/>
</dbReference>
<dbReference type="GO" id="GO:0030983">
    <property type="term" value="F:mismatched DNA binding"/>
    <property type="evidence" value="ECO:0007669"/>
    <property type="project" value="InterPro"/>
</dbReference>
<dbReference type="GO" id="GO:0006298">
    <property type="term" value="P:mismatch repair"/>
    <property type="evidence" value="ECO:0007669"/>
    <property type="project" value="UniProtKB-UniRule"/>
</dbReference>
<dbReference type="CDD" id="cd16926">
    <property type="entry name" value="HATPase_MutL-MLH-PMS-like"/>
    <property type="match status" value="1"/>
</dbReference>
<dbReference type="CDD" id="cd00782">
    <property type="entry name" value="MutL_Trans"/>
    <property type="match status" value="1"/>
</dbReference>
<dbReference type="FunFam" id="3.30.1370.100:FF:000004">
    <property type="entry name" value="DNA mismatch repair endonuclease MutL"/>
    <property type="match status" value="1"/>
</dbReference>
<dbReference type="FunFam" id="3.30.230.10:FF:000036">
    <property type="entry name" value="DNA mismatch repair endonuclease MutL"/>
    <property type="match status" value="1"/>
</dbReference>
<dbReference type="FunFam" id="3.30.565.10:FF:000003">
    <property type="entry name" value="DNA mismatch repair endonuclease MutL"/>
    <property type="match status" value="1"/>
</dbReference>
<dbReference type="Gene3D" id="3.30.230.10">
    <property type="match status" value="1"/>
</dbReference>
<dbReference type="Gene3D" id="3.30.565.10">
    <property type="entry name" value="Histidine kinase-like ATPase, C-terminal domain"/>
    <property type="match status" value="1"/>
</dbReference>
<dbReference type="Gene3D" id="3.30.1540.20">
    <property type="entry name" value="MutL, C-terminal domain, dimerisation subdomain"/>
    <property type="match status" value="1"/>
</dbReference>
<dbReference type="Gene3D" id="3.30.1370.100">
    <property type="entry name" value="MutL, C-terminal domain, regulatory subdomain"/>
    <property type="match status" value="1"/>
</dbReference>
<dbReference type="HAMAP" id="MF_00149">
    <property type="entry name" value="DNA_mis_repair"/>
    <property type="match status" value="1"/>
</dbReference>
<dbReference type="InterPro" id="IPR014762">
    <property type="entry name" value="DNA_mismatch_repair_CS"/>
</dbReference>
<dbReference type="InterPro" id="IPR020667">
    <property type="entry name" value="DNA_mismatch_repair_MutL"/>
</dbReference>
<dbReference type="InterPro" id="IPR013507">
    <property type="entry name" value="DNA_mismatch_S5_2-like"/>
</dbReference>
<dbReference type="InterPro" id="IPR036890">
    <property type="entry name" value="HATPase_C_sf"/>
</dbReference>
<dbReference type="InterPro" id="IPR002099">
    <property type="entry name" value="MutL/Mlh/PMS"/>
</dbReference>
<dbReference type="InterPro" id="IPR038973">
    <property type="entry name" value="MutL/Mlh/Pms-like"/>
</dbReference>
<dbReference type="InterPro" id="IPR014790">
    <property type="entry name" value="MutL_C"/>
</dbReference>
<dbReference type="InterPro" id="IPR042120">
    <property type="entry name" value="MutL_C_dimsub"/>
</dbReference>
<dbReference type="InterPro" id="IPR042121">
    <property type="entry name" value="MutL_C_regsub"/>
</dbReference>
<dbReference type="InterPro" id="IPR037198">
    <property type="entry name" value="MutL_C_sf"/>
</dbReference>
<dbReference type="InterPro" id="IPR020568">
    <property type="entry name" value="Ribosomal_Su5_D2-typ_SF"/>
</dbReference>
<dbReference type="InterPro" id="IPR014721">
    <property type="entry name" value="Ribsml_uS5_D2-typ_fold_subgr"/>
</dbReference>
<dbReference type="NCBIfam" id="TIGR00585">
    <property type="entry name" value="mutl"/>
    <property type="match status" value="1"/>
</dbReference>
<dbReference type="NCBIfam" id="NF000950">
    <property type="entry name" value="PRK00095.1-3"/>
    <property type="match status" value="1"/>
</dbReference>
<dbReference type="PANTHER" id="PTHR10073">
    <property type="entry name" value="DNA MISMATCH REPAIR PROTEIN MLH, PMS, MUTL"/>
    <property type="match status" value="1"/>
</dbReference>
<dbReference type="PANTHER" id="PTHR10073:SF12">
    <property type="entry name" value="DNA MISMATCH REPAIR PROTEIN MLH1"/>
    <property type="match status" value="1"/>
</dbReference>
<dbReference type="Pfam" id="PF01119">
    <property type="entry name" value="DNA_mis_repair"/>
    <property type="match status" value="1"/>
</dbReference>
<dbReference type="Pfam" id="PF13589">
    <property type="entry name" value="HATPase_c_3"/>
    <property type="match status" value="1"/>
</dbReference>
<dbReference type="Pfam" id="PF08676">
    <property type="entry name" value="MutL_C"/>
    <property type="match status" value="1"/>
</dbReference>
<dbReference type="SMART" id="SM01340">
    <property type="entry name" value="DNA_mis_repair"/>
    <property type="match status" value="1"/>
</dbReference>
<dbReference type="SMART" id="SM00853">
    <property type="entry name" value="MutL_C"/>
    <property type="match status" value="1"/>
</dbReference>
<dbReference type="SUPFAM" id="SSF55874">
    <property type="entry name" value="ATPase domain of HSP90 chaperone/DNA topoisomerase II/histidine kinase"/>
    <property type="match status" value="1"/>
</dbReference>
<dbReference type="SUPFAM" id="SSF118116">
    <property type="entry name" value="DNA mismatch repair protein MutL"/>
    <property type="match status" value="1"/>
</dbReference>
<dbReference type="SUPFAM" id="SSF54211">
    <property type="entry name" value="Ribosomal protein S5 domain 2-like"/>
    <property type="match status" value="1"/>
</dbReference>
<dbReference type="PROSITE" id="PS00058">
    <property type="entry name" value="DNA_MISMATCH_REPAIR_1"/>
    <property type="match status" value="1"/>
</dbReference>
<sequence length="647" mass="74045">MGKIRKLDDQLSNLIAAGEVVERPASVVKELVENSIDANSTSIEIHLEEAGLSKIRIIDNGDGIAEEDCIVAFERHATSKIKDENDLFRIRTLGFRGEALPSIASVSELELITSTGDAPGTHLIIKGGDIIKQEKTASRKGTDITVQNLFFNTPARLKYMKTIHTELGNITDIVYRIAMSHPEVSLKLFHNEKKLLHTSGNGDVRQVLASIYSIQVAKKLVPIEAESLDFTIQGYVTLPEVTRASRNYMSTIVNGRYVRNFVLMKAIQQGYHTLLPVGRYPIGFLSIEMDPMLVDVNVHPAKLEVRFSKEQELLKLIEETLQAAFKKIQLIPDAGVTTKKKEKDESVQEQFQFEHAKPKEPSMPEIVLPTGMDEKQEEPQAVKQPTQLWQPPKQEWQPPQSLVREEQSWQPSTKPIIEEPIQEEKSWDSNEEGFELEELEEEVREIKEIEMNGNDLPPLYPIGQMHGTYIFAQNDKGLYMIDQHAAQERINYEYFRDKVGRVAQEVQELLVPYRIDLSLTEFLRVEEQLEELKKVGLFLEQFGHQSFIVRSHPTWFPKGQETEIIDEMMEQVVKLKKVDIKKLREEAAIMMSCKASIKANQYLTNDQIFALLEELRTTTNPYTCPHGRPILVHHSTYELEKMFKRVM</sequence>